<dbReference type="EC" id="6.3.3.1" evidence="1"/>
<dbReference type="EMBL" id="CP000447">
    <property type="protein sequence ID" value="ABI71304.1"/>
    <property type="molecule type" value="Genomic_DNA"/>
</dbReference>
<dbReference type="RefSeq" id="WP_011636925.1">
    <property type="nucleotide sequence ID" value="NC_008345.1"/>
</dbReference>
<dbReference type="SMR" id="Q084L1"/>
<dbReference type="STRING" id="318167.Sfri_1452"/>
<dbReference type="KEGG" id="sfr:Sfri_1452"/>
<dbReference type="eggNOG" id="COG0150">
    <property type="taxonomic scope" value="Bacteria"/>
</dbReference>
<dbReference type="HOGENOM" id="CLU_047116_0_0_6"/>
<dbReference type="OrthoDB" id="9777881at2"/>
<dbReference type="UniPathway" id="UPA00074">
    <property type="reaction ID" value="UER00129"/>
</dbReference>
<dbReference type="Proteomes" id="UP000000684">
    <property type="component" value="Chromosome"/>
</dbReference>
<dbReference type="GO" id="GO:0005829">
    <property type="term" value="C:cytosol"/>
    <property type="evidence" value="ECO:0007669"/>
    <property type="project" value="TreeGrafter"/>
</dbReference>
<dbReference type="GO" id="GO:0005524">
    <property type="term" value="F:ATP binding"/>
    <property type="evidence" value="ECO:0007669"/>
    <property type="project" value="UniProtKB-KW"/>
</dbReference>
<dbReference type="GO" id="GO:0004637">
    <property type="term" value="F:phosphoribosylamine-glycine ligase activity"/>
    <property type="evidence" value="ECO:0007669"/>
    <property type="project" value="TreeGrafter"/>
</dbReference>
<dbReference type="GO" id="GO:0004641">
    <property type="term" value="F:phosphoribosylformylglycinamidine cyclo-ligase activity"/>
    <property type="evidence" value="ECO:0007669"/>
    <property type="project" value="UniProtKB-UniRule"/>
</dbReference>
<dbReference type="GO" id="GO:0006189">
    <property type="term" value="P:'de novo' IMP biosynthetic process"/>
    <property type="evidence" value="ECO:0007669"/>
    <property type="project" value="UniProtKB-UniRule"/>
</dbReference>
<dbReference type="GO" id="GO:0046084">
    <property type="term" value="P:adenine biosynthetic process"/>
    <property type="evidence" value="ECO:0007669"/>
    <property type="project" value="TreeGrafter"/>
</dbReference>
<dbReference type="CDD" id="cd02196">
    <property type="entry name" value="PurM"/>
    <property type="match status" value="1"/>
</dbReference>
<dbReference type="FunFam" id="3.30.1330.10:FF:000001">
    <property type="entry name" value="Phosphoribosylformylglycinamidine cyclo-ligase"/>
    <property type="match status" value="1"/>
</dbReference>
<dbReference type="FunFam" id="3.90.650.10:FF:000001">
    <property type="entry name" value="Phosphoribosylformylglycinamidine cyclo-ligase"/>
    <property type="match status" value="1"/>
</dbReference>
<dbReference type="Gene3D" id="3.90.650.10">
    <property type="entry name" value="PurM-like C-terminal domain"/>
    <property type="match status" value="1"/>
</dbReference>
<dbReference type="Gene3D" id="3.30.1330.10">
    <property type="entry name" value="PurM-like, N-terminal domain"/>
    <property type="match status" value="1"/>
</dbReference>
<dbReference type="HAMAP" id="MF_00741">
    <property type="entry name" value="AIRS"/>
    <property type="match status" value="1"/>
</dbReference>
<dbReference type="InterPro" id="IPR010918">
    <property type="entry name" value="PurM-like_C_dom"/>
</dbReference>
<dbReference type="InterPro" id="IPR036676">
    <property type="entry name" value="PurM-like_C_sf"/>
</dbReference>
<dbReference type="InterPro" id="IPR016188">
    <property type="entry name" value="PurM-like_N"/>
</dbReference>
<dbReference type="InterPro" id="IPR036921">
    <property type="entry name" value="PurM-like_N_sf"/>
</dbReference>
<dbReference type="InterPro" id="IPR004733">
    <property type="entry name" value="PurM_cligase"/>
</dbReference>
<dbReference type="NCBIfam" id="TIGR00878">
    <property type="entry name" value="purM"/>
    <property type="match status" value="1"/>
</dbReference>
<dbReference type="PANTHER" id="PTHR10520:SF12">
    <property type="entry name" value="TRIFUNCTIONAL PURINE BIOSYNTHETIC PROTEIN ADENOSINE-3"/>
    <property type="match status" value="1"/>
</dbReference>
<dbReference type="PANTHER" id="PTHR10520">
    <property type="entry name" value="TRIFUNCTIONAL PURINE BIOSYNTHETIC PROTEIN ADENOSINE-3-RELATED"/>
    <property type="match status" value="1"/>
</dbReference>
<dbReference type="Pfam" id="PF00586">
    <property type="entry name" value="AIRS"/>
    <property type="match status" value="1"/>
</dbReference>
<dbReference type="Pfam" id="PF02769">
    <property type="entry name" value="AIRS_C"/>
    <property type="match status" value="1"/>
</dbReference>
<dbReference type="SUPFAM" id="SSF56042">
    <property type="entry name" value="PurM C-terminal domain-like"/>
    <property type="match status" value="1"/>
</dbReference>
<dbReference type="SUPFAM" id="SSF55326">
    <property type="entry name" value="PurM N-terminal domain-like"/>
    <property type="match status" value="1"/>
</dbReference>
<sequence>MTTPTPLSYKDAGVDIDAGNALVNNIKSAVKRTRRPEVMGNLGGFGALCELPTKYKHPVLVSGTDGVGTKLRLAIDYKKHDTVGVDLVAMCVNDLIVSGAEPLFFLDYYATGKLDVETATSVVSGIAEGCFQSGCALIGGETAEMPGMYEGEDYDLAGFCVGVVEKADIIDGTKVKAGDSLIALASSGPHSNGYSLIRKVLEVSKADPQQDLAGKPLIDHLLEPTRIYVKPLLKLIEQSDIHAMAHITGGGFWENIPRVLPDDCKAVVKGDSWKWPVVFDWLMTNGNIAQHEMFLTFNCGVGMVIALPTEKVDAALALLTAEGENAWLIGEIATRQGDEEQVEII</sequence>
<comment type="catalytic activity">
    <reaction evidence="1">
        <text>2-formamido-N(1)-(5-O-phospho-beta-D-ribosyl)acetamidine + ATP = 5-amino-1-(5-phospho-beta-D-ribosyl)imidazole + ADP + phosphate + H(+)</text>
        <dbReference type="Rhea" id="RHEA:23032"/>
        <dbReference type="ChEBI" id="CHEBI:15378"/>
        <dbReference type="ChEBI" id="CHEBI:30616"/>
        <dbReference type="ChEBI" id="CHEBI:43474"/>
        <dbReference type="ChEBI" id="CHEBI:137981"/>
        <dbReference type="ChEBI" id="CHEBI:147287"/>
        <dbReference type="ChEBI" id="CHEBI:456216"/>
        <dbReference type="EC" id="6.3.3.1"/>
    </reaction>
</comment>
<comment type="pathway">
    <text evidence="1">Purine metabolism; IMP biosynthesis via de novo pathway; 5-amino-1-(5-phospho-D-ribosyl)imidazole from N(2)-formyl-N(1)-(5-phospho-D-ribosyl)glycinamide: step 2/2.</text>
</comment>
<comment type="subcellular location">
    <subcellularLocation>
        <location evidence="1">Cytoplasm</location>
    </subcellularLocation>
</comment>
<comment type="similarity">
    <text evidence="1">Belongs to the AIR synthase family.</text>
</comment>
<evidence type="ECO:0000255" key="1">
    <source>
        <dbReference type="HAMAP-Rule" id="MF_00741"/>
    </source>
</evidence>
<keyword id="KW-0067">ATP-binding</keyword>
<keyword id="KW-0963">Cytoplasm</keyword>
<keyword id="KW-0436">Ligase</keyword>
<keyword id="KW-0547">Nucleotide-binding</keyword>
<keyword id="KW-0658">Purine biosynthesis</keyword>
<keyword id="KW-1185">Reference proteome</keyword>
<organism>
    <name type="scientific">Shewanella frigidimarina (strain NCIMB 400)</name>
    <dbReference type="NCBI Taxonomy" id="318167"/>
    <lineage>
        <taxon>Bacteria</taxon>
        <taxon>Pseudomonadati</taxon>
        <taxon>Pseudomonadota</taxon>
        <taxon>Gammaproteobacteria</taxon>
        <taxon>Alteromonadales</taxon>
        <taxon>Shewanellaceae</taxon>
        <taxon>Shewanella</taxon>
    </lineage>
</organism>
<gene>
    <name evidence="1" type="primary">purM</name>
    <name type="ordered locus">Sfri_1452</name>
</gene>
<feature type="chain" id="PRO_1000062165" description="Phosphoribosylformylglycinamidine cyclo-ligase">
    <location>
        <begin position="1"/>
        <end position="345"/>
    </location>
</feature>
<proteinExistence type="inferred from homology"/>
<protein>
    <recommendedName>
        <fullName evidence="1">Phosphoribosylformylglycinamidine cyclo-ligase</fullName>
        <ecNumber evidence="1">6.3.3.1</ecNumber>
    </recommendedName>
    <alternativeName>
        <fullName evidence="1">AIR synthase</fullName>
    </alternativeName>
    <alternativeName>
        <fullName evidence="1">AIRS</fullName>
    </alternativeName>
    <alternativeName>
        <fullName evidence="1">Phosphoribosyl-aminoimidazole synthetase</fullName>
    </alternativeName>
</protein>
<name>PUR5_SHEFN</name>
<accession>Q084L1</accession>
<reference key="1">
    <citation type="submission" date="2006-08" db="EMBL/GenBank/DDBJ databases">
        <title>Complete sequence of Shewanella frigidimarina NCIMB 400.</title>
        <authorList>
            <consortium name="US DOE Joint Genome Institute"/>
            <person name="Copeland A."/>
            <person name="Lucas S."/>
            <person name="Lapidus A."/>
            <person name="Barry K."/>
            <person name="Detter J.C."/>
            <person name="Glavina del Rio T."/>
            <person name="Hammon N."/>
            <person name="Israni S."/>
            <person name="Dalin E."/>
            <person name="Tice H."/>
            <person name="Pitluck S."/>
            <person name="Fredrickson J.K."/>
            <person name="Kolker E."/>
            <person name="McCuel L.A."/>
            <person name="DiChristina T."/>
            <person name="Nealson K.H."/>
            <person name="Newman D."/>
            <person name="Tiedje J.M."/>
            <person name="Zhou J."/>
            <person name="Romine M.F."/>
            <person name="Culley D.E."/>
            <person name="Serres M."/>
            <person name="Chertkov O."/>
            <person name="Brettin T."/>
            <person name="Bruce D."/>
            <person name="Han C."/>
            <person name="Tapia R."/>
            <person name="Gilna P."/>
            <person name="Schmutz J."/>
            <person name="Larimer F."/>
            <person name="Land M."/>
            <person name="Hauser L."/>
            <person name="Kyrpides N."/>
            <person name="Mikhailova N."/>
            <person name="Richardson P."/>
        </authorList>
    </citation>
    <scope>NUCLEOTIDE SEQUENCE [LARGE SCALE GENOMIC DNA]</scope>
    <source>
        <strain>NCIMB 400</strain>
    </source>
</reference>